<evidence type="ECO:0000255" key="1">
    <source>
        <dbReference type="HAMAP-Rule" id="MF_00336"/>
    </source>
</evidence>
<organism>
    <name type="scientific">Pseudoalteromonas translucida (strain TAC 125)</name>
    <dbReference type="NCBI Taxonomy" id="326442"/>
    <lineage>
        <taxon>Bacteria</taxon>
        <taxon>Pseudomonadati</taxon>
        <taxon>Pseudomonadota</taxon>
        <taxon>Gammaproteobacteria</taxon>
        <taxon>Alteromonadales</taxon>
        <taxon>Pseudoalteromonadaceae</taxon>
        <taxon>Pseudoalteromonas</taxon>
    </lineage>
</organism>
<sequence>MKEFFITGTDTDAGKTHVTSLLLKLLAQHKKQAIGFKPLASGCEMAFDQLVNADALILMESATVSAKYDIINPFAFAPAIAPHIAAEQAGVTITADKLSSAYKNVKQQGADYILTEGAGGWALPISNTDYLYNWVKAEQLPVILVVGMKLGCLNHALLTAAHMQSMGINCIGWIANQVDPNMDEYQANLDSLKLRLPFPILAISPYSEQTPKLQIYKTLLENFALNT</sequence>
<accession>Q3IGS9</accession>
<proteinExistence type="inferred from homology"/>
<protein>
    <recommendedName>
        <fullName evidence="1">ATP-dependent dethiobiotin synthetase BioD</fullName>
        <ecNumber evidence="1">6.3.3.3</ecNumber>
    </recommendedName>
    <alternativeName>
        <fullName evidence="1">DTB synthetase</fullName>
        <shortName evidence="1">DTBS</shortName>
    </alternativeName>
    <alternativeName>
        <fullName evidence="1">Dethiobiotin synthase</fullName>
    </alternativeName>
</protein>
<feature type="chain" id="PRO_0000302540" description="ATP-dependent dethiobiotin synthetase BioD">
    <location>
        <begin position="1"/>
        <end position="227"/>
    </location>
</feature>
<feature type="active site" evidence="1">
    <location>
        <position position="37"/>
    </location>
</feature>
<feature type="binding site" evidence="1">
    <location>
        <begin position="12"/>
        <end position="17"/>
    </location>
    <ligand>
        <name>ATP</name>
        <dbReference type="ChEBI" id="CHEBI:30616"/>
    </ligand>
</feature>
<feature type="binding site" evidence="1">
    <location>
        <position position="16"/>
    </location>
    <ligand>
        <name>Mg(2+)</name>
        <dbReference type="ChEBI" id="CHEBI:18420"/>
    </ligand>
</feature>
<feature type="binding site" evidence="1">
    <location>
        <position position="41"/>
    </location>
    <ligand>
        <name>substrate</name>
    </ligand>
</feature>
<feature type="binding site" evidence="1">
    <location>
        <position position="54"/>
    </location>
    <ligand>
        <name>ATP</name>
        <dbReference type="ChEBI" id="CHEBI:30616"/>
    </ligand>
</feature>
<feature type="binding site" evidence="1">
    <location>
        <position position="54"/>
    </location>
    <ligand>
        <name>Mg(2+)</name>
        <dbReference type="ChEBI" id="CHEBI:18420"/>
    </ligand>
</feature>
<feature type="binding site" evidence="1">
    <location>
        <begin position="116"/>
        <end position="119"/>
    </location>
    <ligand>
        <name>ATP</name>
        <dbReference type="ChEBI" id="CHEBI:30616"/>
    </ligand>
</feature>
<feature type="binding site" evidence="1">
    <location>
        <position position="116"/>
    </location>
    <ligand>
        <name>Mg(2+)</name>
        <dbReference type="ChEBI" id="CHEBI:18420"/>
    </ligand>
</feature>
<feature type="binding site" evidence="1">
    <location>
        <begin position="176"/>
        <end position="177"/>
    </location>
    <ligand>
        <name>ATP</name>
        <dbReference type="ChEBI" id="CHEBI:30616"/>
    </ligand>
</feature>
<feature type="binding site" evidence="1">
    <location>
        <begin position="205"/>
        <end position="207"/>
    </location>
    <ligand>
        <name>ATP</name>
        <dbReference type="ChEBI" id="CHEBI:30616"/>
    </ligand>
</feature>
<dbReference type="EC" id="6.3.3.3" evidence="1"/>
<dbReference type="EMBL" id="CR954246">
    <property type="protein sequence ID" value="CAI86679.1"/>
    <property type="molecule type" value="Genomic_DNA"/>
</dbReference>
<dbReference type="SMR" id="Q3IGS9"/>
<dbReference type="STRING" id="326442.PSHAa1606"/>
<dbReference type="KEGG" id="pha:PSHAa1606"/>
<dbReference type="PATRIC" id="fig|326442.8.peg.1553"/>
<dbReference type="eggNOG" id="COG0132">
    <property type="taxonomic scope" value="Bacteria"/>
</dbReference>
<dbReference type="HOGENOM" id="CLU_072551_0_0_6"/>
<dbReference type="BioCyc" id="PHAL326442:PSHA_RS07875-MONOMER"/>
<dbReference type="UniPathway" id="UPA00078">
    <property type="reaction ID" value="UER00161"/>
</dbReference>
<dbReference type="Proteomes" id="UP000006843">
    <property type="component" value="Chromosome I"/>
</dbReference>
<dbReference type="GO" id="GO:0005829">
    <property type="term" value="C:cytosol"/>
    <property type="evidence" value="ECO:0007669"/>
    <property type="project" value="TreeGrafter"/>
</dbReference>
<dbReference type="GO" id="GO:0005524">
    <property type="term" value="F:ATP binding"/>
    <property type="evidence" value="ECO:0007669"/>
    <property type="project" value="UniProtKB-UniRule"/>
</dbReference>
<dbReference type="GO" id="GO:0004141">
    <property type="term" value="F:dethiobiotin synthase activity"/>
    <property type="evidence" value="ECO:0007669"/>
    <property type="project" value="UniProtKB-UniRule"/>
</dbReference>
<dbReference type="GO" id="GO:0000287">
    <property type="term" value="F:magnesium ion binding"/>
    <property type="evidence" value="ECO:0007669"/>
    <property type="project" value="UniProtKB-UniRule"/>
</dbReference>
<dbReference type="GO" id="GO:0009102">
    <property type="term" value="P:biotin biosynthetic process"/>
    <property type="evidence" value="ECO:0007669"/>
    <property type="project" value="UniProtKB-UniRule"/>
</dbReference>
<dbReference type="CDD" id="cd03109">
    <property type="entry name" value="DTBS"/>
    <property type="match status" value="1"/>
</dbReference>
<dbReference type="FunFam" id="3.40.50.300:FF:000292">
    <property type="entry name" value="ATP-dependent dethiobiotin synthetase BioD"/>
    <property type="match status" value="1"/>
</dbReference>
<dbReference type="Gene3D" id="3.40.50.300">
    <property type="entry name" value="P-loop containing nucleotide triphosphate hydrolases"/>
    <property type="match status" value="1"/>
</dbReference>
<dbReference type="HAMAP" id="MF_00336">
    <property type="entry name" value="BioD"/>
    <property type="match status" value="1"/>
</dbReference>
<dbReference type="InterPro" id="IPR004472">
    <property type="entry name" value="DTB_synth_BioD"/>
</dbReference>
<dbReference type="InterPro" id="IPR027417">
    <property type="entry name" value="P-loop_NTPase"/>
</dbReference>
<dbReference type="NCBIfam" id="TIGR00347">
    <property type="entry name" value="bioD"/>
    <property type="match status" value="1"/>
</dbReference>
<dbReference type="PANTHER" id="PTHR43210">
    <property type="entry name" value="DETHIOBIOTIN SYNTHETASE"/>
    <property type="match status" value="1"/>
</dbReference>
<dbReference type="PANTHER" id="PTHR43210:SF5">
    <property type="entry name" value="DETHIOBIOTIN SYNTHETASE"/>
    <property type="match status" value="1"/>
</dbReference>
<dbReference type="Pfam" id="PF13500">
    <property type="entry name" value="AAA_26"/>
    <property type="match status" value="1"/>
</dbReference>
<dbReference type="PIRSF" id="PIRSF006755">
    <property type="entry name" value="DTB_synth"/>
    <property type="match status" value="1"/>
</dbReference>
<dbReference type="SUPFAM" id="SSF52540">
    <property type="entry name" value="P-loop containing nucleoside triphosphate hydrolases"/>
    <property type="match status" value="1"/>
</dbReference>
<comment type="function">
    <text evidence="1">Catalyzes a mechanistically unusual reaction, the ATP-dependent insertion of CO2 between the N7 and N8 nitrogen atoms of 7,8-diaminopelargonic acid (DAPA, also called 7,8-diammoniononanoate) to form a ureido ring.</text>
</comment>
<comment type="catalytic activity">
    <reaction evidence="1">
        <text>(7R,8S)-7,8-diammoniononanoate + CO2 + ATP = (4R,5S)-dethiobiotin + ADP + phosphate + 3 H(+)</text>
        <dbReference type="Rhea" id="RHEA:15805"/>
        <dbReference type="ChEBI" id="CHEBI:15378"/>
        <dbReference type="ChEBI" id="CHEBI:16526"/>
        <dbReference type="ChEBI" id="CHEBI:30616"/>
        <dbReference type="ChEBI" id="CHEBI:43474"/>
        <dbReference type="ChEBI" id="CHEBI:149469"/>
        <dbReference type="ChEBI" id="CHEBI:149473"/>
        <dbReference type="ChEBI" id="CHEBI:456216"/>
        <dbReference type="EC" id="6.3.3.3"/>
    </reaction>
</comment>
<comment type="cofactor">
    <cofactor evidence="1">
        <name>Mg(2+)</name>
        <dbReference type="ChEBI" id="CHEBI:18420"/>
    </cofactor>
</comment>
<comment type="pathway">
    <text evidence="1">Cofactor biosynthesis; biotin biosynthesis; biotin from 7,8-diaminononanoate: step 1/2.</text>
</comment>
<comment type="subunit">
    <text evidence="1">Homodimer.</text>
</comment>
<comment type="subcellular location">
    <subcellularLocation>
        <location evidence="1">Cytoplasm</location>
    </subcellularLocation>
</comment>
<comment type="similarity">
    <text evidence="1">Belongs to the dethiobiotin synthetase family.</text>
</comment>
<keyword id="KW-0067">ATP-binding</keyword>
<keyword id="KW-0093">Biotin biosynthesis</keyword>
<keyword id="KW-0963">Cytoplasm</keyword>
<keyword id="KW-0436">Ligase</keyword>
<keyword id="KW-0460">Magnesium</keyword>
<keyword id="KW-0479">Metal-binding</keyword>
<keyword id="KW-0547">Nucleotide-binding</keyword>
<keyword id="KW-1185">Reference proteome</keyword>
<gene>
    <name evidence="1" type="primary">bioD</name>
    <name type="ordered locus">PSHAa1606</name>
</gene>
<reference key="1">
    <citation type="journal article" date="2005" name="Genome Res.">
        <title>Coping with cold: the genome of the versatile marine Antarctica bacterium Pseudoalteromonas haloplanktis TAC125.</title>
        <authorList>
            <person name="Medigue C."/>
            <person name="Krin E."/>
            <person name="Pascal G."/>
            <person name="Barbe V."/>
            <person name="Bernsel A."/>
            <person name="Bertin P.N."/>
            <person name="Cheung F."/>
            <person name="Cruveiller S."/>
            <person name="D'Amico S."/>
            <person name="Duilio A."/>
            <person name="Fang G."/>
            <person name="Feller G."/>
            <person name="Ho C."/>
            <person name="Mangenot S."/>
            <person name="Marino G."/>
            <person name="Nilsson J."/>
            <person name="Parrilli E."/>
            <person name="Rocha E.P.C."/>
            <person name="Rouy Z."/>
            <person name="Sekowska A."/>
            <person name="Tutino M.L."/>
            <person name="Vallenet D."/>
            <person name="von Heijne G."/>
            <person name="Danchin A."/>
        </authorList>
    </citation>
    <scope>NUCLEOTIDE SEQUENCE [LARGE SCALE GENOMIC DNA]</scope>
    <source>
        <strain>TAC 125</strain>
    </source>
</reference>
<name>BIOD_PSET1</name>